<accession>P31400</accession>
<reference key="1">
    <citation type="journal article" date="1992" name="FEBS Lett.">
        <title>Cloning and sequencing of cDNA encoding the putative insect plasma membrane V-ATPase subunit A.</title>
        <authorList>
            <person name="Graf R."/>
            <person name="Novak F.J."/>
            <person name="Harvey W.R."/>
            <person name="Wieczorek H."/>
        </authorList>
    </citation>
    <scope>NUCLEOTIDE SEQUENCE [MRNA]</scope>
    <source>
        <tissue>Midgut</tissue>
    </source>
</reference>
<organism>
    <name type="scientific">Manduca sexta</name>
    <name type="common">Tobacco hawkmoth</name>
    <name type="synonym">Tobacco hornworm</name>
    <dbReference type="NCBI Taxonomy" id="7130"/>
    <lineage>
        <taxon>Eukaryota</taxon>
        <taxon>Metazoa</taxon>
        <taxon>Ecdysozoa</taxon>
        <taxon>Arthropoda</taxon>
        <taxon>Hexapoda</taxon>
        <taxon>Insecta</taxon>
        <taxon>Pterygota</taxon>
        <taxon>Neoptera</taxon>
        <taxon>Endopterygota</taxon>
        <taxon>Lepidoptera</taxon>
        <taxon>Glossata</taxon>
        <taxon>Ditrysia</taxon>
        <taxon>Bombycoidea</taxon>
        <taxon>Sphingidae</taxon>
        <taxon>Sphinginae</taxon>
        <taxon>Sphingini</taxon>
        <taxon>Manduca</taxon>
    </lineage>
</organism>
<gene>
    <name type="primary">VHAA</name>
</gene>
<comment type="function">
    <text evidence="2 3">Catalytic subunit of the V1 complex of vacuolar(H+)-ATPase (V-ATPase), a multisubunit enzyme composed of a peripheral complex (V1) that hydrolyzes ATP and a membrane integral complex (V0) that translocates protons (By similarity). V-ATPase is responsible for acidifying and maintaining the pH of intracellular compartments and in some cell types, is targeted to the plasma membrane, where it is responsible for acidifying the extracellular environment (By similarity).</text>
</comment>
<comment type="catalytic activity">
    <reaction evidence="3">
        <text>ATP + H2O + 4 H(+)(in) = ADP + phosphate + 5 H(+)(out)</text>
        <dbReference type="Rhea" id="RHEA:57720"/>
        <dbReference type="ChEBI" id="CHEBI:15377"/>
        <dbReference type="ChEBI" id="CHEBI:15378"/>
        <dbReference type="ChEBI" id="CHEBI:30616"/>
        <dbReference type="ChEBI" id="CHEBI:43474"/>
        <dbReference type="ChEBI" id="CHEBI:456216"/>
        <dbReference type="EC" id="7.1.2.2"/>
    </reaction>
</comment>
<comment type="activity regulation">
    <text evidence="1">ATP hydrolysis occurs at the interface between the nucleotide-binding domains of subunits A and B (By similarity). ATP hydrolysis triggers a conformational change in the subunits D and F, which induces a shift of subunit d (By similarity). The c-ring is subsequently rotated and results in a continuous proton translocation across the membrane (By similarity).</text>
</comment>
<comment type="subunit">
    <text evidence="2">V-ATPase is a heteromultimeric enzyme made up of two complexes: the ATP-hydrolytic V1 complex and the proton translocation V0 complex (By similarity). The V1 complex consists of three catalytic AB heterodimers that form a heterohexamer, three peripheral stalks each consisting of EG heterodimers, one central rotor including subunits D and F, and the regulatory subunits C and H (By similarity). The proton translocation complex V0 consists of the proton transport subunit a, a ring of proteolipid subunits c9c'', rotary subunit d, subunits e and f, and the accessory subunits VhaAC45 and ATP6AP2 (By similarity).</text>
</comment>
<comment type="similarity">
    <text evidence="4">Belongs to the ATPase alpha/beta chains family.</text>
</comment>
<feature type="chain" id="PRO_0000144568" description="V-type proton ATPase catalytic subunit A">
    <location>
        <begin position="1"/>
        <end position="617"/>
    </location>
</feature>
<feature type="binding site" evidence="2">
    <location>
        <begin position="250"/>
        <end position="257"/>
    </location>
    <ligand>
        <name>ATP</name>
        <dbReference type="ChEBI" id="CHEBI:30616"/>
    </ligand>
</feature>
<dbReference type="EC" id="7.1.2.2" evidence="3"/>
<dbReference type="EMBL" id="X64233">
    <property type="protein sequence ID" value="CAA45537.1"/>
    <property type="molecule type" value="mRNA"/>
</dbReference>
<dbReference type="PIR" id="S21107">
    <property type="entry name" value="S21107"/>
</dbReference>
<dbReference type="SMR" id="P31400"/>
<dbReference type="DIP" id="DIP-61386N"/>
<dbReference type="IntAct" id="P31400">
    <property type="interactions" value="1"/>
</dbReference>
<dbReference type="EnsemblMetazoa" id="XM_030172710.2">
    <property type="protein sequence ID" value="XP_030028570.1"/>
    <property type="gene ID" value="LOC115446150"/>
</dbReference>
<dbReference type="OrthoDB" id="1676488at2759"/>
<dbReference type="GO" id="GO:0005765">
    <property type="term" value="C:lysosomal membrane"/>
    <property type="evidence" value="ECO:0007669"/>
    <property type="project" value="TreeGrafter"/>
</dbReference>
<dbReference type="GO" id="GO:0033180">
    <property type="term" value="C:proton-transporting V-type ATPase, V1 domain"/>
    <property type="evidence" value="ECO:0007669"/>
    <property type="project" value="InterPro"/>
</dbReference>
<dbReference type="GO" id="GO:0005524">
    <property type="term" value="F:ATP binding"/>
    <property type="evidence" value="ECO:0007669"/>
    <property type="project" value="UniProtKB-KW"/>
</dbReference>
<dbReference type="GO" id="GO:0016887">
    <property type="term" value="F:ATP hydrolysis activity"/>
    <property type="evidence" value="ECO:0007669"/>
    <property type="project" value="InterPro"/>
</dbReference>
<dbReference type="GO" id="GO:0046961">
    <property type="term" value="F:proton-transporting ATPase activity, rotational mechanism"/>
    <property type="evidence" value="ECO:0007669"/>
    <property type="project" value="InterPro"/>
</dbReference>
<dbReference type="GO" id="GO:0046034">
    <property type="term" value="P:ATP metabolic process"/>
    <property type="evidence" value="ECO:0007669"/>
    <property type="project" value="InterPro"/>
</dbReference>
<dbReference type="CDD" id="cd18111">
    <property type="entry name" value="ATP-synt_V_A-type_alpha_C"/>
    <property type="match status" value="1"/>
</dbReference>
<dbReference type="CDD" id="cd18119">
    <property type="entry name" value="ATP-synt_V_A-type_alpha_N"/>
    <property type="match status" value="1"/>
</dbReference>
<dbReference type="CDD" id="cd01134">
    <property type="entry name" value="V_A-ATPase_A"/>
    <property type="match status" value="1"/>
</dbReference>
<dbReference type="FunFam" id="1.10.1140.10:FF:000002">
    <property type="entry name" value="V-type proton ATPase catalytic subunit A"/>
    <property type="match status" value="1"/>
</dbReference>
<dbReference type="FunFam" id="2.40.30.20:FF:000002">
    <property type="entry name" value="V-type proton ATPase catalytic subunit A"/>
    <property type="match status" value="1"/>
</dbReference>
<dbReference type="FunFam" id="2.40.50.100:FF:000008">
    <property type="entry name" value="V-type proton ATPase catalytic subunit A"/>
    <property type="match status" value="1"/>
</dbReference>
<dbReference type="FunFam" id="3.40.50.300:FF:000052">
    <property type="entry name" value="V-type proton ATPase catalytic subunit A"/>
    <property type="match status" value="1"/>
</dbReference>
<dbReference type="Gene3D" id="2.40.30.20">
    <property type="match status" value="1"/>
</dbReference>
<dbReference type="Gene3D" id="2.40.50.100">
    <property type="match status" value="1"/>
</dbReference>
<dbReference type="Gene3D" id="1.10.1140.10">
    <property type="entry name" value="Bovine Mitochondrial F1-atpase, Atp Synthase Beta Chain, Chain D, domain 3"/>
    <property type="match status" value="1"/>
</dbReference>
<dbReference type="Gene3D" id="3.40.50.300">
    <property type="entry name" value="P-loop containing nucleotide triphosphate hydrolases"/>
    <property type="match status" value="1"/>
</dbReference>
<dbReference type="HAMAP" id="MF_00309">
    <property type="entry name" value="ATP_synth_A_arch"/>
    <property type="match status" value="1"/>
</dbReference>
<dbReference type="InterPro" id="IPR055190">
    <property type="entry name" value="ATP-synt_VA_C"/>
</dbReference>
<dbReference type="InterPro" id="IPR031686">
    <property type="entry name" value="ATP-synth_a_Xtn"/>
</dbReference>
<dbReference type="InterPro" id="IPR023366">
    <property type="entry name" value="ATP_synth_asu-like_sf"/>
</dbReference>
<dbReference type="InterPro" id="IPR020003">
    <property type="entry name" value="ATPase_a/bsu_AS"/>
</dbReference>
<dbReference type="InterPro" id="IPR004100">
    <property type="entry name" value="ATPase_F1/V1/A1_a/bsu_N"/>
</dbReference>
<dbReference type="InterPro" id="IPR036121">
    <property type="entry name" value="ATPase_F1/V1/A1_a/bsu_N_sf"/>
</dbReference>
<dbReference type="InterPro" id="IPR000194">
    <property type="entry name" value="ATPase_F1/V1/A1_a/bsu_nucl-bd"/>
</dbReference>
<dbReference type="InterPro" id="IPR024034">
    <property type="entry name" value="ATPase_F1/V1_b/a_C"/>
</dbReference>
<dbReference type="InterPro" id="IPR005725">
    <property type="entry name" value="ATPase_V1-cplx_asu"/>
</dbReference>
<dbReference type="InterPro" id="IPR027417">
    <property type="entry name" value="P-loop_NTPase"/>
</dbReference>
<dbReference type="InterPro" id="IPR022878">
    <property type="entry name" value="V-ATPase_asu"/>
</dbReference>
<dbReference type="NCBIfam" id="NF003220">
    <property type="entry name" value="PRK04192.1"/>
    <property type="match status" value="1"/>
</dbReference>
<dbReference type="NCBIfam" id="TIGR01042">
    <property type="entry name" value="V-ATPase_V1_A"/>
    <property type="match status" value="1"/>
</dbReference>
<dbReference type="PANTHER" id="PTHR43607:SF1">
    <property type="entry name" value="H(+)-TRANSPORTING TWO-SECTOR ATPASE"/>
    <property type="match status" value="1"/>
</dbReference>
<dbReference type="PANTHER" id="PTHR43607">
    <property type="entry name" value="V-TYPE PROTON ATPASE CATALYTIC SUBUNIT A"/>
    <property type="match status" value="1"/>
</dbReference>
<dbReference type="Pfam" id="PF00006">
    <property type="entry name" value="ATP-synt_ab"/>
    <property type="match status" value="1"/>
</dbReference>
<dbReference type="Pfam" id="PF02874">
    <property type="entry name" value="ATP-synt_ab_N"/>
    <property type="match status" value="1"/>
</dbReference>
<dbReference type="Pfam" id="PF16886">
    <property type="entry name" value="ATP-synt_ab_Xtn"/>
    <property type="match status" value="1"/>
</dbReference>
<dbReference type="Pfam" id="PF22919">
    <property type="entry name" value="ATP-synt_VA_C"/>
    <property type="match status" value="1"/>
</dbReference>
<dbReference type="SUPFAM" id="SSF47917">
    <property type="entry name" value="C-terminal domain of alpha and beta subunits of F1 ATP synthase"/>
    <property type="match status" value="1"/>
</dbReference>
<dbReference type="SUPFAM" id="SSF50615">
    <property type="entry name" value="N-terminal domain of alpha and beta subunits of F1 ATP synthase"/>
    <property type="match status" value="1"/>
</dbReference>
<dbReference type="SUPFAM" id="SSF52540">
    <property type="entry name" value="P-loop containing nucleoside triphosphate hydrolases"/>
    <property type="match status" value="1"/>
</dbReference>
<dbReference type="PROSITE" id="PS00152">
    <property type="entry name" value="ATPASE_ALPHA_BETA"/>
    <property type="match status" value="1"/>
</dbReference>
<proteinExistence type="evidence at transcript level"/>
<sequence length="617" mass="68166">MASKGGLKTIANEENEERFGYVFAVSGPVVTAEKMSGSAMYELVRVGYNELVGEIIRLEGDMATIQVYEETSGVTVGDPVLRTGKPLSVELGPGILGSIFDGIQRPLKDINELTQSIYIPKGVNVPSLAREVDWEFNPLNVKVGSHITGGDLYGIVHENTLVKHKMLMPPRAKGTVTYIAPAGNYKVTDVVLETEFDGEKAQYTMLQVWPVRQPRPVTEKLPANHPLLTGQRVLDSLFPCVQGGTTAIPGAFGCGKTVISQALSKYSNSDVIIYVGCGERGNEMSEVLRDFPELTVEIEGVTESIMKRTALVANTSNMPVAAREASIYTGITLSEYFRDMGYNVSMMADSTSRWAEALREISGRLAEMPADSGYPAYLGARLASFYERAGRVKCLGNPDREGSVSIVGAVSPPGGDFSDPVTAATLGIVQVFWGLDKKLAQRKHFPSINWLISYSKYMRALDDFYEKNYPEFVPLRTKVKEILQEEEDLSEIVQLVGKASLAETDKITLEVAKLLKDDFLQQNSYSSYDRFCPFYKTVGMLKNIISFYDMSRHAVESTAQSDNKVTWNVIRDAMGNVLYQLSSMKFKDPVKDGEAKIKADFDQLLEDMSAAFRNLED</sequence>
<protein>
    <recommendedName>
        <fullName>V-type proton ATPase catalytic subunit A</fullName>
        <shortName>V-ATPase subunit A</shortName>
        <ecNumber evidence="3">7.1.2.2</ecNumber>
    </recommendedName>
    <alternativeName>
        <fullName>V-ATPase 69 kDa subunit</fullName>
    </alternativeName>
    <alternativeName>
        <fullName>Vacuolar proton pump subunit alpha</fullName>
    </alternativeName>
</protein>
<evidence type="ECO:0000250" key="1">
    <source>
        <dbReference type="UniProtKB" id="P31404"/>
    </source>
</evidence>
<evidence type="ECO:0000250" key="2">
    <source>
        <dbReference type="UniProtKB" id="P38606"/>
    </source>
</evidence>
<evidence type="ECO:0000250" key="3">
    <source>
        <dbReference type="UniProtKB" id="P50516"/>
    </source>
</evidence>
<evidence type="ECO:0000305" key="4"/>
<name>VATA_MANSE</name>
<keyword id="KW-0067">ATP-binding</keyword>
<keyword id="KW-0375">Hydrogen ion transport</keyword>
<keyword id="KW-0406">Ion transport</keyword>
<keyword id="KW-0547">Nucleotide-binding</keyword>
<keyword id="KW-1278">Translocase</keyword>
<keyword id="KW-0813">Transport</keyword>